<name>AMPA_BUCA5</name>
<sequence>MNFFIKSCFLDKEKTDCIVVSVFELSELSDSAIYLDKCSNGHITSLIKLGDIQGKIGDTLMLYKVPKILSKRILLVGCGKKDEINIIRFKKILKNTIHAIKKKSIKNIVYSFSNINIDNIYWMIRRMVLSLKESLYETIKINNTNIKNTNIHSITLNIIKKNDLFIAKTALKHALAIDHAITSTKNLSNLPPNICNPLYLSYKAQELSKKYENNIVVEIIDIKKMKELGMNAYIAVGNGSKNKPFMSVIKYSGNNIVNKKIIAFVGKGLTFDSGGISIKPALHMHEMKYDMCGAAAVYGTLIMAAELQLPLTVIGILSGCENMVGSHSFRPGDVLTTMSGQTVEILNTDAEGRLVLCDSLTYLERFSPDIVIDVATLTGACVTALGESVSGLFSNNEELSNQLLHASQETDDKIWSLPLFSEYHKELNSDIADFSNIGRGKAGAITAACFLSKFTKKYNWAHLDIAGTAWKSGKKSGATGRPVELLCQFLLNQSNYIYN</sequence>
<proteinExistence type="inferred from homology"/>
<gene>
    <name evidence="1" type="primary">pepA</name>
    <name type="ordered locus">BUAP5A_360</name>
</gene>
<comment type="function">
    <text evidence="1">Presumably involved in the processing and regular turnover of intracellular proteins. Catalyzes the removal of unsubstituted N-terminal amino acids from various peptides.</text>
</comment>
<comment type="catalytic activity">
    <reaction evidence="1">
        <text>Release of an N-terminal amino acid, Xaa-|-Yaa-, in which Xaa is preferably Leu, but may be other amino acids including Pro although not Arg or Lys, and Yaa may be Pro. Amino acid amides and methyl esters are also readily hydrolyzed, but rates on arylamides are exceedingly low.</text>
        <dbReference type="EC" id="3.4.11.1"/>
    </reaction>
</comment>
<comment type="catalytic activity">
    <reaction evidence="1">
        <text>Release of an N-terminal amino acid, preferentially leucine, but not glutamic or aspartic acids.</text>
        <dbReference type="EC" id="3.4.11.10"/>
    </reaction>
</comment>
<comment type="cofactor">
    <cofactor evidence="1">
        <name>Mn(2+)</name>
        <dbReference type="ChEBI" id="CHEBI:29035"/>
    </cofactor>
    <text evidence="1">Binds 2 manganese ions per subunit.</text>
</comment>
<comment type="subcellular location">
    <subcellularLocation>
        <location evidence="1">Cytoplasm</location>
    </subcellularLocation>
</comment>
<comment type="similarity">
    <text evidence="1">Belongs to the peptidase M17 family.</text>
</comment>
<protein>
    <recommendedName>
        <fullName evidence="1">Probable cytosol aminopeptidase</fullName>
        <ecNumber evidence="1">3.4.11.1</ecNumber>
    </recommendedName>
    <alternativeName>
        <fullName evidence="1">Leucine aminopeptidase</fullName>
        <shortName evidence="1">LAP</shortName>
        <ecNumber evidence="1">3.4.11.10</ecNumber>
    </alternativeName>
    <alternativeName>
        <fullName evidence="1">Leucyl aminopeptidase</fullName>
    </alternativeName>
</protein>
<feature type="chain" id="PRO_1000192707" description="Probable cytosol aminopeptidase">
    <location>
        <begin position="1"/>
        <end position="499"/>
    </location>
</feature>
<feature type="active site" evidence="1">
    <location>
        <position position="279"/>
    </location>
</feature>
<feature type="active site" evidence="1">
    <location>
        <position position="353"/>
    </location>
</feature>
<feature type="binding site" evidence="1">
    <location>
        <position position="267"/>
    </location>
    <ligand>
        <name>Mn(2+)</name>
        <dbReference type="ChEBI" id="CHEBI:29035"/>
        <label>2</label>
    </ligand>
</feature>
<feature type="binding site" evidence="1">
    <location>
        <position position="272"/>
    </location>
    <ligand>
        <name>Mn(2+)</name>
        <dbReference type="ChEBI" id="CHEBI:29035"/>
        <label>1</label>
    </ligand>
</feature>
<feature type="binding site" evidence="1">
    <location>
        <position position="272"/>
    </location>
    <ligand>
        <name>Mn(2+)</name>
        <dbReference type="ChEBI" id="CHEBI:29035"/>
        <label>2</label>
    </ligand>
</feature>
<feature type="binding site" evidence="1">
    <location>
        <position position="290"/>
    </location>
    <ligand>
        <name>Mn(2+)</name>
        <dbReference type="ChEBI" id="CHEBI:29035"/>
        <label>2</label>
    </ligand>
</feature>
<feature type="binding site" evidence="1">
    <location>
        <position position="349"/>
    </location>
    <ligand>
        <name>Mn(2+)</name>
        <dbReference type="ChEBI" id="CHEBI:29035"/>
        <label>1</label>
    </ligand>
</feature>
<feature type="binding site" evidence="1">
    <location>
        <position position="351"/>
    </location>
    <ligand>
        <name>Mn(2+)</name>
        <dbReference type="ChEBI" id="CHEBI:29035"/>
        <label>1</label>
    </ligand>
</feature>
<feature type="binding site" evidence="1">
    <location>
        <position position="351"/>
    </location>
    <ligand>
        <name>Mn(2+)</name>
        <dbReference type="ChEBI" id="CHEBI:29035"/>
        <label>2</label>
    </ligand>
</feature>
<keyword id="KW-0031">Aminopeptidase</keyword>
<keyword id="KW-0963">Cytoplasm</keyword>
<keyword id="KW-0378">Hydrolase</keyword>
<keyword id="KW-0464">Manganese</keyword>
<keyword id="KW-0479">Metal-binding</keyword>
<keyword id="KW-0645">Protease</keyword>
<reference key="1">
    <citation type="journal article" date="2009" name="Science">
        <title>The dynamics and time scale of ongoing genomic erosion in symbiotic bacteria.</title>
        <authorList>
            <person name="Moran N.A."/>
            <person name="McLaughlin H.J."/>
            <person name="Sorek R."/>
        </authorList>
    </citation>
    <scope>NUCLEOTIDE SEQUENCE [LARGE SCALE GENOMIC DNA]</scope>
    <source>
        <strain>5A</strain>
    </source>
</reference>
<dbReference type="EC" id="3.4.11.1" evidence="1"/>
<dbReference type="EC" id="3.4.11.10" evidence="1"/>
<dbReference type="EMBL" id="CP001161">
    <property type="protein sequence ID" value="ACL30723.1"/>
    <property type="molecule type" value="Genomic_DNA"/>
</dbReference>
<dbReference type="RefSeq" id="WP_009874324.1">
    <property type="nucleotide sequence ID" value="NC_011833.1"/>
</dbReference>
<dbReference type="SMR" id="B8D9F2"/>
<dbReference type="MEROPS" id="M17.003"/>
<dbReference type="KEGG" id="bap:BUAP5A_360"/>
<dbReference type="HOGENOM" id="CLU_013734_2_2_6"/>
<dbReference type="OrthoDB" id="9809354at2"/>
<dbReference type="Proteomes" id="UP000006904">
    <property type="component" value="Chromosome"/>
</dbReference>
<dbReference type="GO" id="GO:0005737">
    <property type="term" value="C:cytoplasm"/>
    <property type="evidence" value="ECO:0007669"/>
    <property type="project" value="UniProtKB-SubCell"/>
</dbReference>
<dbReference type="GO" id="GO:0030145">
    <property type="term" value="F:manganese ion binding"/>
    <property type="evidence" value="ECO:0007669"/>
    <property type="project" value="UniProtKB-UniRule"/>
</dbReference>
<dbReference type="GO" id="GO:0070006">
    <property type="term" value="F:metalloaminopeptidase activity"/>
    <property type="evidence" value="ECO:0007669"/>
    <property type="project" value="InterPro"/>
</dbReference>
<dbReference type="GO" id="GO:0006508">
    <property type="term" value="P:proteolysis"/>
    <property type="evidence" value="ECO:0007669"/>
    <property type="project" value="UniProtKB-KW"/>
</dbReference>
<dbReference type="CDD" id="cd00433">
    <property type="entry name" value="Peptidase_M17"/>
    <property type="match status" value="1"/>
</dbReference>
<dbReference type="FunFam" id="3.40.630.10:FF:000004">
    <property type="entry name" value="Probable cytosol aminopeptidase"/>
    <property type="match status" value="1"/>
</dbReference>
<dbReference type="Gene3D" id="3.40.220.10">
    <property type="entry name" value="Leucine Aminopeptidase, subunit E, domain 1"/>
    <property type="match status" value="1"/>
</dbReference>
<dbReference type="Gene3D" id="3.40.630.10">
    <property type="entry name" value="Zn peptidases"/>
    <property type="match status" value="1"/>
</dbReference>
<dbReference type="HAMAP" id="MF_00181">
    <property type="entry name" value="Cytosol_peptidase_M17"/>
    <property type="match status" value="1"/>
</dbReference>
<dbReference type="InterPro" id="IPR011356">
    <property type="entry name" value="Leucine_aapep/pepB"/>
</dbReference>
<dbReference type="InterPro" id="IPR043472">
    <property type="entry name" value="Macro_dom-like"/>
</dbReference>
<dbReference type="InterPro" id="IPR000819">
    <property type="entry name" value="Peptidase_M17_C"/>
</dbReference>
<dbReference type="InterPro" id="IPR023042">
    <property type="entry name" value="Peptidase_M17_leu_NH2_pept"/>
</dbReference>
<dbReference type="InterPro" id="IPR008283">
    <property type="entry name" value="Peptidase_M17_N"/>
</dbReference>
<dbReference type="NCBIfam" id="NF002074">
    <property type="entry name" value="PRK00913.1-4"/>
    <property type="match status" value="1"/>
</dbReference>
<dbReference type="PANTHER" id="PTHR11963:SF23">
    <property type="entry name" value="CYTOSOL AMINOPEPTIDASE"/>
    <property type="match status" value="1"/>
</dbReference>
<dbReference type="PANTHER" id="PTHR11963">
    <property type="entry name" value="LEUCINE AMINOPEPTIDASE-RELATED"/>
    <property type="match status" value="1"/>
</dbReference>
<dbReference type="Pfam" id="PF00883">
    <property type="entry name" value="Peptidase_M17"/>
    <property type="match status" value="1"/>
</dbReference>
<dbReference type="Pfam" id="PF02789">
    <property type="entry name" value="Peptidase_M17_N"/>
    <property type="match status" value="1"/>
</dbReference>
<dbReference type="PRINTS" id="PR00481">
    <property type="entry name" value="LAMNOPPTDASE"/>
</dbReference>
<dbReference type="SUPFAM" id="SSF52949">
    <property type="entry name" value="Macro domain-like"/>
    <property type="match status" value="1"/>
</dbReference>
<dbReference type="SUPFAM" id="SSF53187">
    <property type="entry name" value="Zn-dependent exopeptidases"/>
    <property type="match status" value="1"/>
</dbReference>
<dbReference type="PROSITE" id="PS00631">
    <property type="entry name" value="CYTOSOL_AP"/>
    <property type="match status" value="1"/>
</dbReference>
<organism>
    <name type="scientific">Buchnera aphidicola subsp. Acyrthosiphon pisum (strain 5A)</name>
    <dbReference type="NCBI Taxonomy" id="563178"/>
    <lineage>
        <taxon>Bacteria</taxon>
        <taxon>Pseudomonadati</taxon>
        <taxon>Pseudomonadota</taxon>
        <taxon>Gammaproteobacteria</taxon>
        <taxon>Enterobacterales</taxon>
        <taxon>Erwiniaceae</taxon>
        <taxon>Buchnera</taxon>
    </lineage>
</organism>
<evidence type="ECO:0000255" key="1">
    <source>
        <dbReference type="HAMAP-Rule" id="MF_00181"/>
    </source>
</evidence>
<accession>B8D9F2</accession>